<accession>P40932</accession>
<sequence length="100" mass="10925">MACSTLPKSPKDKIDPRDLLIPLILFLSLKGARSAAPGSSPHQVYNITWEVTNGDRETVWAISGRLYVSGRDPGLTFGIRLRYQNLGPRVPIGPNPVLAD</sequence>
<feature type="signal peptide" evidence="1">
    <location>
        <begin position="1"/>
        <end position="34"/>
    </location>
</feature>
<feature type="chain" id="PRO_0000239594" description="Envelope glycoprotein">
    <location>
        <begin position="35"/>
        <end position="100"/>
    </location>
</feature>
<feature type="glycosylation site" description="N-linked (GlcNAc...) asparagine; by host" evidence="1">
    <location>
        <position position="46"/>
    </location>
</feature>
<keyword id="KW-1169">Fusion of virus membrane with host cell membrane</keyword>
<keyword id="KW-1168">Fusion of virus membrane with host membrane</keyword>
<keyword id="KW-0325">Glycoprotein</keyword>
<keyword id="KW-0945">Host-virus interaction</keyword>
<keyword id="KW-0472">Membrane</keyword>
<keyword id="KW-0732">Signal</keyword>
<keyword id="KW-1161">Viral attachment to host cell</keyword>
<keyword id="KW-1162">Viral penetration into host cytoplasm</keyword>
<keyword id="KW-0946">Virion</keyword>
<keyword id="KW-1160">Virus entry into host cell</keyword>
<organism>
    <name type="scientific">Myeloproliferative leukemia virus</name>
    <name type="common">MpLV</name>
    <dbReference type="NCBI Taxonomy" id="11973"/>
    <lineage>
        <taxon>Viruses</taxon>
        <taxon>Riboviria</taxon>
        <taxon>Pararnavirae</taxon>
        <taxon>Artverviricota</taxon>
        <taxon>Revtraviricetes</taxon>
        <taxon>Ortervirales</taxon>
        <taxon>Retroviridae</taxon>
    </lineage>
</organism>
<comment type="subcellular location">
    <subcellularLocation>
        <location evidence="2">Virion membrane</location>
    </subcellularLocation>
</comment>
<comment type="miscellaneous">
    <text>This protein is synthesized as a Env-vMpl chimeric protein. The sequence shown here corresponds to the Env homolog fragment of the chimera. The Env homolog part of the chimera has an internal deletion compared to other retroviruses Env sequences.</text>
</comment>
<organismHost>
    <name type="scientific">Mus musculus</name>
    <name type="common">Mouse</name>
    <dbReference type="NCBI Taxonomy" id="10090"/>
</organismHost>
<proteinExistence type="inferred from homology"/>
<reference key="1">
    <citation type="journal article" date="1990" name="Cell">
        <title>A putative truncated cytokine receptor gene transduced by the myeloproliferative leukemia virus immortalizes hematopoietic progenitors.</title>
        <authorList>
            <person name="Souyri M."/>
            <person name="Vigon I."/>
            <person name="Penciolelli J.-F."/>
            <person name="Heard J.-M."/>
            <person name="Tambourin P."/>
            <person name="Wendling F."/>
        </authorList>
    </citation>
    <scope>NUCLEOTIDE SEQUENCE [GENOMIC DNA]</scope>
</reference>
<gene>
    <name type="primary">env</name>
</gene>
<evidence type="ECO:0000255" key="1"/>
<evidence type="ECO:0000305" key="2"/>
<dbReference type="EMBL" id="M60350">
    <property type="protein sequence ID" value="AAA77654.1"/>
    <property type="status" value="ALT_TERM"/>
    <property type="molecule type" value="Genomic_DNA"/>
</dbReference>
<dbReference type="PIR" id="S27931">
    <property type="entry name" value="S27931"/>
</dbReference>
<dbReference type="SMR" id="P40932"/>
<dbReference type="GlyCosmos" id="P40932">
    <property type="glycosylation" value="1 site, No reported glycans"/>
</dbReference>
<dbReference type="GO" id="GO:0016020">
    <property type="term" value="C:membrane"/>
    <property type="evidence" value="ECO:0007669"/>
    <property type="project" value="UniProtKB-KW"/>
</dbReference>
<dbReference type="GO" id="GO:0055036">
    <property type="term" value="C:virion membrane"/>
    <property type="evidence" value="ECO:0007669"/>
    <property type="project" value="UniProtKB-SubCell"/>
</dbReference>
<dbReference type="GO" id="GO:0019064">
    <property type="term" value="P:fusion of virus membrane with host plasma membrane"/>
    <property type="evidence" value="ECO:0007669"/>
    <property type="project" value="UniProtKB-KW"/>
</dbReference>
<dbReference type="GO" id="GO:0046718">
    <property type="term" value="P:symbiont entry into host cell"/>
    <property type="evidence" value="ECO:0007669"/>
    <property type="project" value="UniProtKB-KW"/>
</dbReference>
<dbReference type="GO" id="GO:0019062">
    <property type="term" value="P:virion attachment to host cell"/>
    <property type="evidence" value="ECO:0007669"/>
    <property type="project" value="UniProtKB-KW"/>
</dbReference>
<dbReference type="InterPro" id="IPR008981">
    <property type="entry name" value="FMuLV_rcpt-bd"/>
</dbReference>
<dbReference type="SUPFAM" id="SSF49830">
    <property type="entry name" value="ENV polyprotein, receptor-binding domain"/>
    <property type="match status" value="1"/>
</dbReference>
<protein>
    <recommendedName>
        <fullName>Envelope glycoprotein</fullName>
    </recommendedName>
    <alternativeName>
        <fullName>Env polyprotein</fullName>
    </alternativeName>
</protein>
<name>ENV_MPLV</name>